<name>ARLY_BIFLS</name>
<sequence>MTENNEHLALWGGRFTSGPSPELARLSKSTQFDWRLADDDIAGSRAHARALGRAGLLTADELQRMEDALDTLQRHVDDGSFAPIEDDEDEATALERGLIDIAGDELGGKLRAGRSRNDQIACLIRMWLRRHSRAIAGLLLDLVNALIEQSEKAGRTVMPGRTHMQHAQPVLLAHQLMAHAWPLIRDVQRLIDWDKRINASPYGSGALAGNTLGLDPEAVARELGFSRVTDNSIDGTAARDLVAEFAFVAAMTGVDISRLSEEIIIWNTQEFAFVKLDDGYSTGSSIMPQKKNPDIAELARGKSGRLIGDLTGLLSTLKGLPTAYARDLQEDKEAVFDQVDTLEVLLPAFTGMVKTMHFDGDRLEEEAPTGFALATDIAEWLVKNGVPFRHAHELSGACVKLAEGRGQELWDLTDNDFIETFAAFLPADKAPGVREVLSSHGSVDSRNGKGGTAYGRVREQIADAKAEVEELKLFPASTSDGSAYKAPGTF</sequence>
<reference key="1">
    <citation type="journal article" date="2008" name="Proc. Natl. Acad. Sci. U.S.A.">
        <title>The genome sequence of Bifidobacterium longum subsp. infantis reveals adaptations for milk utilization within the infant microbiome.</title>
        <authorList>
            <person name="Sela D.A."/>
            <person name="Chapman J."/>
            <person name="Adeuya A."/>
            <person name="Kim J.H."/>
            <person name="Chen F."/>
            <person name="Whitehead T.R."/>
            <person name="Lapidus A."/>
            <person name="Rokhsar D.S."/>
            <person name="Lebrilla C.B."/>
            <person name="German J.B."/>
            <person name="Price N.P."/>
            <person name="Richardson P.M."/>
            <person name="Mills D.A."/>
        </authorList>
    </citation>
    <scope>NUCLEOTIDE SEQUENCE [LARGE SCALE GENOMIC DNA]</scope>
    <source>
        <strain>ATCC 15697 / DSM 20088 / JCM 1222 / NCTC 11817 / S12</strain>
    </source>
</reference>
<reference key="2">
    <citation type="journal article" date="2011" name="Nature">
        <title>Bifidobacteria can protect from enteropathogenic infection through production of acetate.</title>
        <authorList>
            <person name="Fukuda S."/>
            <person name="Toh H."/>
            <person name="Hase K."/>
            <person name="Oshima K."/>
            <person name="Nakanishi Y."/>
            <person name="Yoshimura K."/>
            <person name="Tobe T."/>
            <person name="Clarke J.M."/>
            <person name="Topping D.L."/>
            <person name="Suzuki T."/>
            <person name="Taylor T.D."/>
            <person name="Itoh K."/>
            <person name="Kikuchi J."/>
            <person name="Morita H."/>
            <person name="Hattori M."/>
            <person name="Ohno H."/>
        </authorList>
    </citation>
    <scope>NUCLEOTIDE SEQUENCE [LARGE SCALE GENOMIC DNA]</scope>
    <source>
        <strain>ATCC 15697 / DSM 20088 / JCM 1222 / NCTC 11817 / S12</strain>
    </source>
</reference>
<evidence type="ECO:0000255" key="1">
    <source>
        <dbReference type="HAMAP-Rule" id="MF_00006"/>
    </source>
</evidence>
<dbReference type="EC" id="4.3.2.1" evidence="1"/>
<dbReference type="EMBL" id="CP001095">
    <property type="protein sequence ID" value="ACJ52948.1"/>
    <property type="molecule type" value="Genomic_DNA"/>
</dbReference>
<dbReference type="EMBL" id="AP010889">
    <property type="protein sequence ID" value="BAJ69519.1"/>
    <property type="molecule type" value="Genomic_DNA"/>
</dbReference>
<dbReference type="RefSeq" id="WP_012578161.1">
    <property type="nucleotide sequence ID" value="NC_011593.1"/>
</dbReference>
<dbReference type="SMR" id="B7GTN9"/>
<dbReference type="KEGG" id="bln:Blon_1874"/>
<dbReference type="KEGG" id="blon:BLIJ_1940"/>
<dbReference type="PATRIC" id="fig|391904.8.peg.1945"/>
<dbReference type="HOGENOM" id="CLU_027272_2_2_11"/>
<dbReference type="UniPathway" id="UPA00068">
    <property type="reaction ID" value="UER00114"/>
</dbReference>
<dbReference type="Proteomes" id="UP000001360">
    <property type="component" value="Chromosome"/>
</dbReference>
<dbReference type="GO" id="GO:0005829">
    <property type="term" value="C:cytosol"/>
    <property type="evidence" value="ECO:0007669"/>
    <property type="project" value="TreeGrafter"/>
</dbReference>
<dbReference type="GO" id="GO:0004056">
    <property type="term" value="F:argininosuccinate lyase activity"/>
    <property type="evidence" value="ECO:0007669"/>
    <property type="project" value="UniProtKB-UniRule"/>
</dbReference>
<dbReference type="GO" id="GO:0042450">
    <property type="term" value="P:arginine biosynthetic process via ornithine"/>
    <property type="evidence" value="ECO:0007669"/>
    <property type="project" value="InterPro"/>
</dbReference>
<dbReference type="GO" id="GO:0006526">
    <property type="term" value="P:L-arginine biosynthetic process"/>
    <property type="evidence" value="ECO:0007669"/>
    <property type="project" value="UniProtKB-UniRule"/>
</dbReference>
<dbReference type="CDD" id="cd01359">
    <property type="entry name" value="Argininosuccinate_lyase"/>
    <property type="match status" value="1"/>
</dbReference>
<dbReference type="FunFam" id="1.10.40.30:FF:000001">
    <property type="entry name" value="Argininosuccinate lyase"/>
    <property type="match status" value="1"/>
</dbReference>
<dbReference type="FunFam" id="1.20.200.10:FF:000015">
    <property type="entry name" value="argininosuccinate lyase isoform X2"/>
    <property type="match status" value="1"/>
</dbReference>
<dbReference type="Gene3D" id="1.10.40.30">
    <property type="entry name" value="Fumarase/aspartase (C-terminal domain)"/>
    <property type="match status" value="1"/>
</dbReference>
<dbReference type="Gene3D" id="1.20.200.10">
    <property type="entry name" value="Fumarase/aspartase (Central domain)"/>
    <property type="match status" value="1"/>
</dbReference>
<dbReference type="Gene3D" id="1.10.275.10">
    <property type="entry name" value="Fumarase/aspartase (N-terminal domain)"/>
    <property type="match status" value="1"/>
</dbReference>
<dbReference type="HAMAP" id="MF_00006">
    <property type="entry name" value="Arg_succ_lyase"/>
    <property type="match status" value="1"/>
</dbReference>
<dbReference type="InterPro" id="IPR029419">
    <property type="entry name" value="Arg_succ_lyase_C"/>
</dbReference>
<dbReference type="InterPro" id="IPR009049">
    <property type="entry name" value="Argininosuccinate_lyase"/>
</dbReference>
<dbReference type="InterPro" id="IPR024083">
    <property type="entry name" value="Fumarase/histidase_N"/>
</dbReference>
<dbReference type="InterPro" id="IPR020557">
    <property type="entry name" value="Fumarate_lyase_CS"/>
</dbReference>
<dbReference type="InterPro" id="IPR000362">
    <property type="entry name" value="Fumarate_lyase_fam"/>
</dbReference>
<dbReference type="InterPro" id="IPR022761">
    <property type="entry name" value="Fumarate_lyase_N"/>
</dbReference>
<dbReference type="InterPro" id="IPR008948">
    <property type="entry name" value="L-Aspartase-like"/>
</dbReference>
<dbReference type="NCBIfam" id="TIGR00838">
    <property type="entry name" value="argH"/>
    <property type="match status" value="1"/>
</dbReference>
<dbReference type="PANTHER" id="PTHR43814">
    <property type="entry name" value="ARGININOSUCCINATE LYASE"/>
    <property type="match status" value="1"/>
</dbReference>
<dbReference type="PANTHER" id="PTHR43814:SF1">
    <property type="entry name" value="ARGININOSUCCINATE LYASE"/>
    <property type="match status" value="1"/>
</dbReference>
<dbReference type="Pfam" id="PF14698">
    <property type="entry name" value="ASL_C2"/>
    <property type="match status" value="1"/>
</dbReference>
<dbReference type="Pfam" id="PF00206">
    <property type="entry name" value="Lyase_1"/>
    <property type="match status" value="1"/>
</dbReference>
<dbReference type="PRINTS" id="PR00145">
    <property type="entry name" value="ARGSUCLYASE"/>
</dbReference>
<dbReference type="PRINTS" id="PR00149">
    <property type="entry name" value="FUMRATELYASE"/>
</dbReference>
<dbReference type="SUPFAM" id="SSF48557">
    <property type="entry name" value="L-aspartase-like"/>
    <property type="match status" value="1"/>
</dbReference>
<dbReference type="PROSITE" id="PS00163">
    <property type="entry name" value="FUMARATE_LYASES"/>
    <property type="match status" value="1"/>
</dbReference>
<keyword id="KW-0028">Amino-acid biosynthesis</keyword>
<keyword id="KW-0055">Arginine biosynthesis</keyword>
<keyword id="KW-0963">Cytoplasm</keyword>
<keyword id="KW-0456">Lyase</keyword>
<accession>B7GTN9</accession>
<accession>E8MLU2</accession>
<protein>
    <recommendedName>
        <fullName evidence="1">Argininosuccinate lyase</fullName>
        <shortName evidence="1">ASAL</shortName>
        <ecNumber evidence="1">4.3.2.1</ecNumber>
    </recommendedName>
    <alternativeName>
        <fullName evidence="1">Arginosuccinase</fullName>
    </alternativeName>
</protein>
<proteinExistence type="inferred from homology"/>
<feature type="chain" id="PRO_1000116311" description="Argininosuccinate lyase">
    <location>
        <begin position="1"/>
        <end position="490"/>
    </location>
</feature>
<gene>
    <name evidence="1" type="primary">argH</name>
    <name type="ordered locus">Blon_1874</name>
    <name type="ordered locus">BLIJ_1940</name>
</gene>
<organism>
    <name type="scientific">Bifidobacterium longum subsp. infantis (strain ATCC 15697 / DSM 20088 / JCM 1222 / NCTC 11817 / S12)</name>
    <dbReference type="NCBI Taxonomy" id="391904"/>
    <lineage>
        <taxon>Bacteria</taxon>
        <taxon>Bacillati</taxon>
        <taxon>Actinomycetota</taxon>
        <taxon>Actinomycetes</taxon>
        <taxon>Bifidobacteriales</taxon>
        <taxon>Bifidobacteriaceae</taxon>
        <taxon>Bifidobacterium</taxon>
    </lineage>
</organism>
<comment type="catalytic activity">
    <reaction evidence="1">
        <text>2-(N(omega)-L-arginino)succinate = fumarate + L-arginine</text>
        <dbReference type="Rhea" id="RHEA:24020"/>
        <dbReference type="ChEBI" id="CHEBI:29806"/>
        <dbReference type="ChEBI" id="CHEBI:32682"/>
        <dbReference type="ChEBI" id="CHEBI:57472"/>
        <dbReference type="EC" id="4.3.2.1"/>
    </reaction>
</comment>
<comment type="pathway">
    <text evidence="1">Amino-acid biosynthesis; L-arginine biosynthesis; L-arginine from L-ornithine and carbamoyl phosphate: step 3/3.</text>
</comment>
<comment type="subcellular location">
    <subcellularLocation>
        <location evidence="1">Cytoplasm</location>
    </subcellularLocation>
</comment>
<comment type="similarity">
    <text evidence="1">Belongs to the lyase 1 family. Argininosuccinate lyase subfamily.</text>
</comment>